<name>PSF2_DEBHA</name>
<gene>
    <name type="primary">PSF2</name>
    <name type="ordered locus">DEHA2A04686g</name>
</gene>
<sequence length="206" mass="24025">MVLPAHLQNSLMPSEVSFLAENEYITILPRYSMKKLELIGTKVPTLRGMRREKIPIWIAVILKSQDKCNIVPPEWLNLIYLKEKYEEELKQPHKFSVLPWNWLEISKILLNKAADDLSDPTHQLRSIIQDLREIRLVKSRKGLKELNESNIQLDGLSLLEINELRPFVLTVMNKLRQLHESVNTKTDRGTGNDQDDDMYHDVSDNE</sequence>
<keyword id="KW-0159">Chromosome partition</keyword>
<keyword id="KW-0235">DNA replication</keyword>
<keyword id="KW-0539">Nucleus</keyword>
<keyword id="KW-1185">Reference proteome</keyword>
<dbReference type="EMBL" id="CR382133">
    <property type="protein sequence ID" value="CAG84480.2"/>
    <property type="molecule type" value="Genomic_DNA"/>
</dbReference>
<dbReference type="RefSeq" id="XP_456525.2">
    <property type="nucleotide sequence ID" value="XM_456525.2"/>
</dbReference>
<dbReference type="SMR" id="Q6BZ44"/>
<dbReference type="FunCoup" id="Q6BZ44">
    <property type="interactions" value="724"/>
</dbReference>
<dbReference type="STRING" id="284592.Q6BZ44"/>
<dbReference type="GeneID" id="2899812"/>
<dbReference type="KEGG" id="dha:DEHA2A04686g"/>
<dbReference type="VEuPathDB" id="FungiDB:DEHA2A04686g"/>
<dbReference type="eggNOG" id="KOG4071">
    <property type="taxonomic scope" value="Eukaryota"/>
</dbReference>
<dbReference type="HOGENOM" id="CLU_078274_1_1_1"/>
<dbReference type="InParanoid" id="Q6BZ44"/>
<dbReference type="OMA" id="GPYYMEL"/>
<dbReference type="OrthoDB" id="1938138at2759"/>
<dbReference type="Proteomes" id="UP000000599">
    <property type="component" value="Chromosome A"/>
</dbReference>
<dbReference type="GO" id="GO:0000785">
    <property type="term" value="C:chromatin"/>
    <property type="evidence" value="ECO:0007669"/>
    <property type="project" value="EnsemblFungi"/>
</dbReference>
<dbReference type="GO" id="GO:0071162">
    <property type="term" value="C:CMG complex"/>
    <property type="evidence" value="ECO:0007669"/>
    <property type="project" value="EnsemblFungi"/>
</dbReference>
<dbReference type="GO" id="GO:0000811">
    <property type="term" value="C:GINS complex"/>
    <property type="evidence" value="ECO:0007669"/>
    <property type="project" value="EnsemblFungi"/>
</dbReference>
<dbReference type="GO" id="GO:0043596">
    <property type="term" value="C:nuclear replication fork"/>
    <property type="evidence" value="ECO:0007669"/>
    <property type="project" value="EnsemblFungi"/>
</dbReference>
<dbReference type="GO" id="GO:0007059">
    <property type="term" value="P:chromosome segregation"/>
    <property type="evidence" value="ECO:0007669"/>
    <property type="project" value="UniProtKB-KW"/>
</dbReference>
<dbReference type="GO" id="GO:0000727">
    <property type="term" value="P:double-strand break repair via break-induced replication"/>
    <property type="evidence" value="ECO:0007669"/>
    <property type="project" value="EnsemblFungi"/>
</dbReference>
<dbReference type="GO" id="GO:0033260">
    <property type="term" value="P:nuclear DNA replication"/>
    <property type="evidence" value="ECO:0007669"/>
    <property type="project" value="EnsemblFungi"/>
</dbReference>
<dbReference type="CDD" id="cd11712">
    <property type="entry name" value="GINS_A_psf2"/>
    <property type="match status" value="1"/>
</dbReference>
<dbReference type="CDD" id="cd21694">
    <property type="entry name" value="GINS_B_Psf2"/>
    <property type="match status" value="1"/>
</dbReference>
<dbReference type="FunFam" id="1.20.58.1020:FF:000001">
    <property type="entry name" value="DNA replication complex GINS protein PSF2"/>
    <property type="match status" value="1"/>
</dbReference>
<dbReference type="FunFam" id="3.40.5.50:FF:000001">
    <property type="entry name" value="DNA replication complex GINS protein PSF2"/>
    <property type="match status" value="1"/>
</dbReference>
<dbReference type="Gene3D" id="1.20.58.1020">
    <property type="match status" value="1"/>
</dbReference>
<dbReference type="Gene3D" id="3.40.5.50">
    <property type="match status" value="1"/>
</dbReference>
<dbReference type="InterPro" id="IPR021151">
    <property type="entry name" value="GINS_A"/>
</dbReference>
<dbReference type="InterPro" id="IPR036224">
    <property type="entry name" value="GINS_bundle-like_dom_sf"/>
</dbReference>
<dbReference type="InterPro" id="IPR007257">
    <property type="entry name" value="GINS_Psf2"/>
</dbReference>
<dbReference type="InterPro" id="IPR056784">
    <property type="entry name" value="PSF2_N"/>
</dbReference>
<dbReference type="PANTHER" id="PTHR12772">
    <property type="entry name" value="DNA REPLICATION COMPLEX GINS PROTEIN PSF2"/>
    <property type="match status" value="1"/>
</dbReference>
<dbReference type="PANTHER" id="PTHR12772:SF0">
    <property type="entry name" value="DNA REPLICATION COMPLEX GINS PROTEIN PSF2"/>
    <property type="match status" value="1"/>
</dbReference>
<dbReference type="Pfam" id="PF25005">
    <property type="entry name" value="PSF2_N"/>
    <property type="match status" value="1"/>
</dbReference>
<dbReference type="Pfam" id="PF05916">
    <property type="entry name" value="Sld5"/>
    <property type="match status" value="1"/>
</dbReference>
<dbReference type="PIRSF" id="PIRSF028998">
    <property type="entry name" value="GINS_Psf2_subgr"/>
    <property type="match status" value="1"/>
</dbReference>
<dbReference type="SUPFAM" id="SSF158573">
    <property type="entry name" value="GINS helical bundle-like"/>
    <property type="match status" value="1"/>
</dbReference>
<dbReference type="SUPFAM" id="SSF160059">
    <property type="entry name" value="PriA/YqbF domain"/>
    <property type="match status" value="1"/>
</dbReference>
<organism>
    <name type="scientific">Debaryomyces hansenii (strain ATCC 36239 / CBS 767 / BCRC 21394 / JCM 1990 / NBRC 0083 / IGC 2968)</name>
    <name type="common">Yeast</name>
    <name type="synonym">Torulaspora hansenii</name>
    <dbReference type="NCBI Taxonomy" id="284592"/>
    <lineage>
        <taxon>Eukaryota</taxon>
        <taxon>Fungi</taxon>
        <taxon>Dikarya</taxon>
        <taxon>Ascomycota</taxon>
        <taxon>Saccharomycotina</taxon>
        <taxon>Pichiomycetes</taxon>
        <taxon>Debaryomycetaceae</taxon>
        <taxon>Debaryomyces</taxon>
    </lineage>
</organism>
<comment type="function">
    <text evidence="1">The GINS complex plays an essential role in the initiation of DNA replication. Has a role in chromosome segregation (By similarity).</text>
</comment>
<comment type="subunit">
    <text evidence="1">Component of the GINS complex which is a heterotetramer of SLD5, PSF1, PSF2 and PSF3.</text>
</comment>
<comment type="subcellular location">
    <subcellularLocation>
        <location evidence="1">Nucleus</location>
    </subcellularLocation>
</comment>
<comment type="similarity">
    <text evidence="3">Belongs to the GINS2/PSF2 family.</text>
</comment>
<reference key="1">
    <citation type="journal article" date="2004" name="Nature">
        <title>Genome evolution in yeasts.</title>
        <authorList>
            <person name="Dujon B."/>
            <person name="Sherman D."/>
            <person name="Fischer G."/>
            <person name="Durrens P."/>
            <person name="Casaregola S."/>
            <person name="Lafontaine I."/>
            <person name="de Montigny J."/>
            <person name="Marck C."/>
            <person name="Neuveglise C."/>
            <person name="Talla E."/>
            <person name="Goffard N."/>
            <person name="Frangeul L."/>
            <person name="Aigle M."/>
            <person name="Anthouard V."/>
            <person name="Babour A."/>
            <person name="Barbe V."/>
            <person name="Barnay S."/>
            <person name="Blanchin S."/>
            <person name="Beckerich J.-M."/>
            <person name="Beyne E."/>
            <person name="Bleykasten C."/>
            <person name="Boisrame A."/>
            <person name="Boyer J."/>
            <person name="Cattolico L."/>
            <person name="Confanioleri F."/>
            <person name="de Daruvar A."/>
            <person name="Despons L."/>
            <person name="Fabre E."/>
            <person name="Fairhead C."/>
            <person name="Ferry-Dumazet H."/>
            <person name="Groppi A."/>
            <person name="Hantraye F."/>
            <person name="Hennequin C."/>
            <person name="Jauniaux N."/>
            <person name="Joyet P."/>
            <person name="Kachouri R."/>
            <person name="Kerrest A."/>
            <person name="Koszul R."/>
            <person name="Lemaire M."/>
            <person name="Lesur I."/>
            <person name="Ma L."/>
            <person name="Muller H."/>
            <person name="Nicaud J.-M."/>
            <person name="Nikolski M."/>
            <person name="Oztas S."/>
            <person name="Ozier-Kalogeropoulos O."/>
            <person name="Pellenz S."/>
            <person name="Potier S."/>
            <person name="Richard G.-F."/>
            <person name="Straub M.-L."/>
            <person name="Suleau A."/>
            <person name="Swennen D."/>
            <person name="Tekaia F."/>
            <person name="Wesolowski-Louvel M."/>
            <person name="Westhof E."/>
            <person name="Wirth B."/>
            <person name="Zeniou-Meyer M."/>
            <person name="Zivanovic Y."/>
            <person name="Bolotin-Fukuhara M."/>
            <person name="Thierry A."/>
            <person name="Bouchier C."/>
            <person name="Caudron B."/>
            <person name="Scarpelli C."/>
            <person name="Gaillardin C."/>
            <person name="Weissenbach J."/>
            <person name="Wincker P."/>
            <person name="Souciet J.-L."/>
        </authorList>
    </citation>
    <scope>NUCLEOTIDE SEQUENCE [LARGE SCALE GENOMIC DNA]</scope>
    <source>
        <strain>ATCC 36239 / CBS 767 / BCRC 21394 / JCM 1990 / NBRC 0083 / IGC 2968</strain>
    </source>
</reference>
<accession>Q6BZ44</accession>
<proteinExistence type="inferred from homology"/>
<feature type="chain" id="PRO_0000255424" description="DNA replication complex GINS protein PSF2">
    <location>
        <begin position="1"/>
        <end position="206"/>
    </location>
</feature>
<feature type="region of interest" description="Disordered" evidence="2">
    <location>
        <begin position="182"/>
        <end position="206"/>
    </location>
</feature>
<feature type="compositionally biased region" description="Basic and acidic residues" evidence="2">
    <location>
        <begin position="197"/>
        <end position="206"/>
    </location>
</feature>
<protein>
    <recommendedName>
        <fullName>DNA replication complex GINS protein PSF2</fullName>
    </recommendedName>
</protein>
<evidence type="ECO:0000250" key="1"/>
<evidence type="ECO:0000256" key="2">
    <source>
        <dbReference type="SAM" id="MobiDB-lite"/>
    </source>
</evidence>
<evidence type="ECO:0000305" key="3"/>